<evidence type="ECO:0000250" key="1"/>
<evidence type="ECO:0000255" key="2"/>
<evidence type="ECO:0000255" key="3">
    <source>
        <dbReference type="PROSITE-ProRule" id="PRU00068"/>
    </source>
</evidence>
<evidence type="ECO:0000255" key="4">
    <source>
        <dbReference type="PROSITE-ProRule" id="PRU00276"/>
    </source>
</evidence>
<evidence type="ECO:0000255" key="5">
    <source>
        <dbReference type="PROSITE-ProRule" id="PRU10095"/>
    </source>
</evidence>
<evidence type="ECO:0000305" key="6"/>
<keyword id="KW-1217">Cell adhesion impairing toxin</keyword>
<keyword id="KW-1015">Disulfide bond</keyword>
<keyword id="KW-1206">Fibrinogenolytic toxin</keyword>
<keyword id="KW-0325">Glycoprotein</keyword>
<keyword id="KW-1199">Hemostasis impairing toxin</keyword>
<keyword id="KW-0378">Hydrolase</keyword>
<keyword id="KW-0479">Metal-binding</keyword>
<keyword id="KW-0482">Metalloprotease</keyword>
<keyword id="KW-1201">Platelet aggregation inhibiting toxin</keyword>
<keyword id="KW-0645">Protease</keyword>
<keyword id="KW-0964">Secreted</keyword>
<keyword id="KW-0732">Signal</keyword>
<keyword id="KW-0800">Toxin</keyword>
<keyword id="KW-0862">Zinc</keyword>
<keyword id="KW-0865">Zymogen</keyword>
<comment type="function">
    <text evidence="1">Snake venom zinc metalloproteinase that inhibits platelet aggregation and degrades fibrinogen.</text>
</comment>
<comment type="cofactor">
    <cofactor evidence="1">
        <name>Zn(2+)</name>
        <dbReference type="ChEBI" id="CHEBI:29105"/>
    </cofactor>
    <text evidence="1">Binds 1 zinc ion per subunit.</text>
</comment>
<comment type="subunit">
    <text evidence="1">Monomer.</text>
</comment>
<comment type="subcellular location">
    <subcellularLocation>
        <location evidence="1">Secreted</location>
    </subcellularLocation>
</comment>
<comment type="tissue specificity">
    <text>Expressed by the venom gland.</text>
</comment>
<comment type="similarity">
    <text evidence="6">Belongs to the venom metalloproteinase (M12B) family. P-III subfamily. P-IIIa sub-subfamily.</text>
</comment>
<dbReference type="EC" id="3.4.24.-"/>
<dbReference type="EMBL" id="EF080829">
    <property type="protein sequence ID" value="ABN72536.1"/>
    <property type="molecule type" value="mRNA"/>
</dbReference>
<dbReference type="SMR" id="A8QL48"/>
<dbReference type="MEROPS" id="M12.159"/>
<dbReference type="GO" id="GO:0005576">
    <property type="term" value="C:extracellular region"/>
    <property type="evidence" value="ECO:0007669"/>
    <property type="project" value="UniProtKB-SubCell"/>
</dbReference>
<dbReference type="GO" id="GO:0043655">
    <property type="term" value="C:host extracellular space"/>
    <property type="evidence" value="ECO:0000250"/>
    <property type="project" value="UniProtKB"/>
</dbReference>
<dbReference type="GO" id="GO:0005886">
    <property type="term" value="C:plasma membrane"/>
    <property type="evidence" value="ECO:0007669"/>
    <property type="project" value="TreeGrafter"/>
</dbReference>
<dbReference type="GO" id="GO:0046872">
    <property type="term" value="F:metal ion binding"/>
    <property type="evidence" value="ECO:0007669"/>
    <property type="project" value="UniProtKB-KW"/>
</dbReference>
<dbReference type="GO" id="GO:0004222">
    <property type="term" value="F:metalloendopeptidase activity"/>
    <property type="evidence" value="ECO:0000250"/>
    <property type="project" value="UniProtKB"/>
</dbReference>
<dbReference type="GO" id="GO:0090729">
    <property type="term" value="F:toxin activity"/>
    <property type="evidence" value="ECO:0007669"/>
    <property type="project" value="UniProtKB-KW"/>
</dbReference>
<dbReference type="GO" id="GO:0006508">
    <property type="term" value="P:proteolysis"/>
    <property type="evidence" value="ECO:0007669"/>
    <property type="project" value="UniProtKB-KW"/>
</dbReference>
<dbReference type="GO" id="GO:0044485">
    <property type="term" value="P:venom-mediated fibrinogenolysis in another organism"/>
    <property type="evidence" value="ECO:0000250"/>
    <property type="project" value="UniProtKB"/>
</dbReference>
<dbReference type="GO" id="GO:0044358">
    <property type="term" value="P:venom-mediated hemorrhage in another organism"/>
    <property type="evidence" value="ECO:0000250"/>
    <property type="project" value="UniProtKB"/>
</dbReference>
<dbReference type="GO" id="GO:0044477">
    <property type="term" value="P:venom-mediated suppression of platelet aggregation"/>
    <property type="evidence" value="ECO:0000250"/>
    <property type="project" value="UniProtKB"/>
</dbReference>
<dbReference type="CDD" id="cd04269">
    <property type="entry name" value="ZnMc_adamalysin_II_like"/>
    <property type="match status" value="1"/>
</dbReference>
<dbReference type="FunFam" id="3.40.390.10:FF:000002">
    <property type="entry name" value="Disintegrin and metalloproteinase domain-containing protein 22"/>
    <property type="match status" value="1"/>
</dbReference>
<dbReference type="FunFam" id="4.10.70.10:FF:000001">
    <property type="entry name" value="Disintegrin and metalloproteinase domain-containing protein 22"/>
    <property type="match status" value="1"/>
</dbReference>
<dbReference type="Gene3D" id="3.40.390.10">
    <property type="entry name" value="Collagenase (Catalytic Domain)"/>
    <property type="match status" value="1"/>
</dbReference>
<dbReference type="Gene3D" id="4.10.70.10">
    <property type="entry name" value="Disintegrin domain"/>
    <property type="match status" value="1"/>
</dbReference>
<dbReference type="InterPro" id="IPR006586">
    <property type="entry name" value="ADAM_Cys-rich"/>
</dbReference>
<dbReference type="InterPro" id="IPR018358">
    <property type="entry name" value="Disintegrin_CS"/>
</dbReference>
<dbReference type="InterPro" id="IPR001762">
    <property type="entry name" value="Disintegrin_dom"/>
</dbReference>
<dbReference type="InterPro" id="IPR036436">
    <property type="entry name" value="Disintegrin_dom_sf"/>
</dbReference>
<dbReference type="InterPro" id="IPR024079">
    <property type="entry name" value="MetalloPept_cat_dom_sf"/>
</dbReference>
<dbReference type="InterPro" id="IPR001590">
    <property type="entry name" value="Peptidase_M12B"/>
</dbReference>
<dbReference type="InterPro" id="IPR002870">
    <property type="entry name" value="Peptidase_M12B_N"/>
</dbReference>
<dbReference type="InterPro" id="IPR034027">
    <property type="entry name" value="Reprolysin_adamalysin"/>
</dbReference>
<dbReference type="PANTHER" id="PTHR11905">
    <property type="entry name" value="ADAM A DISINTEGRIN AND METALLOPROTEASE DOMAIN"/>
    <property type="match status" value="1"/>
</dbReference>
<dbReference type="PANTHER" id="PTHR11905:SF32">
    <property type="entry name" value="DISINTEGRIN AND METALLOPROTEINASE DOMAIN-CONTAINING PROTEIN 28"/>
    <property type="match status" value="1"/>
</dbReference>
<dbReference type="Pfam" id="PF08516">
    <property type="entry name" value="ADAM_CR"/>
    <property type="match status" value="1"/>
</dbReference>
<dbReference type="Pfam" id="PF00200">
    <property type="entry name" value="Disintegrin"/>
    <property type="match status" value="1"/>
</dbReference>
<dbReference type="Pfam" id="PF01562">
    <property type="entry name" value="Pep_M12B_propep"/>
    <property type="match status" value="1"/>
</dbReference>
<dbReference type="Pfam" id="PF01421">
    <property type="entry name" value="Reprolysin"/>
    <property type="match status" value="1"/>
</dbReference>
<dbReference type="PRINTS" id="PR00289">
    <property type="entry name" value="DISINTEGRIN"/>
</dbReference>
<dbReference type="SMART" id="SM00608">
    <property type="entry name" value="ACR"/>
    <property type="match status" value="1"/>
</dbReference>
<dbReference type="SMART" id="SM00050">
    <property type="entry name" value="DISIN"/>
    <property type="match status" value="1"/>
</dbReference>
<dbReference type="SUPFAM" id="SSF57552">
    <property type="entry name" value="Blood coagulation inhibitor (disintegrin)"/>
    <property type="match status" value="1"/>
</dbReference>
<dbReference type="SUPFAM" id="SSF55486">
    <property type="entry name" value="Metalloproteases ('zincins'), catalytic domain"/>
    <property type="match status" value="1"/>
</dbReference>
<dbReference type="PROSITE" id="PS50215">
    <property type="entry name" value="ADAM_MEPRO"/>
    <property type="match status" value="1"/>
</dbReference>
<dbReference type="PROSITE" id="PS00427">
    <property type="entry name" value="DISINTEGRIN_1"/>
    <property type="match status" value="1"/>
</dbReference>
<dbReference type="PROSITE" id="PS50214">
    <property type="entry name" value="DISINTEGRIN_2"/>
    <property type="match status" value="1"/>
</dbReference>
<dbReference type="PROSITE" id="PS00142">
    <property type="entry name" value="ZINC_PROTEASE"/>
    <property type="match status" value="1"/>
</dbReference>
<proteinExistence type="evidence at transcript level"/>
<feature type="signal peptide" evidence="2">
    <location>
        <begin position="1" status="less than"/>
        <end position="11"/>
    </location>
</feature>
<feature type="propeptide" id="PRO_0000417639" evidence="1">
    <location>
        <begin position="12"/>
        <end position="179"/>
    </location>
</feature>
<feature type="chain" id="PRO_0000417640" description="Zinc metalloproteinase-disintegrin-like BfMP">
    <location>
        <begin position="180"/>
        <end position="605"/>
    </location>
</feature>
<feature type="domain" description="Peptidase M12B" evidence="4">
    <location>
        <begin position="196"/>
        <end position="392"/>
    </location>
</feature>
<feature type="domain" description="Disintegrin" evidence="3">
    <location>
        <begin position="400"/>
        <end position="486"/>
    </location>
</feature>
<feature type="short sequence motif" description="D/ECD-tripeptide">
    <location>
        <begin position="464"/>
        <end position="466"/>
    </location>
</feature>
<feature type="active site" evidence="4 5">
    <location>
        <position position="333"/>
    </location>
</feature>
<feature type="binding site" evidence="1">
    <location>
        <position position="332"/>
    </location>
    <ligand>
        <name>Zn(2+)</name>
        <dbReference type="ChEBI" id="CHEBI:29105"/>
        <note>catalytic</note>
    </ligand>
</feature>
<feature type="binding site" evidence="1">
    <location>
        <position position="336"/>
    </location>
    <ligand>
        <name>Zn(2+)</name>
        <dbReference type="ChEBI" id="CHEBI:29105"/>
        <note>catalytic</note>
    </ligand>
</feature>
<feature type="binding site" evidence="1">
    <location>
        <position position="342"/>
    </location>
    <ligand>
        <name>Zn(2+)</name>
        <dbReference type="ChEBI" id="CHEBI:29105"/>
        <note>catalytic</note>
    </ligand>
</feature>
<feature type="glycosylation site" description="N-linked (GlcNAc...) asparagine" evidence="2">
    <location>
        <position position="178"/>
    </location>
</feature>
<feature type="glycosylation site" description="N-linked (GlcNAc...) asparagine" evidence="2">
    <location>
        <position position="215"/>
    </location>
</feature>
<feature type="disulfide bond" evidence="1">
    <location>
        <begin position="307"/>
        <end position="387"/>
    </location>
</feature>
<feature type="disulfide bond" evidence="1">
    <location>
        <begin position="347"/>
        <end position="371"/>
    </location>
</feature>
<feature type="disulfide bond" evidence="1">
    <location>
        <begin position="350"/>
        <end position="355"/>
    </location>
</feature>
<feature type="disulfide bond" evidence="1">
    <location>
        <begin position="403"/>
        <end position="432"/>
    </location>
</feature>
<feature type="disulfide bond" evidence="1">
    <location>
        <begin position="414"/>
        <end position="427"/>
    </location>
</feature>
<feature type="disulfide bond" evidence="1">
    <location>
        <begin position="416"/>
        <end position="422"/>
    </location>
</feature>
<feature type="disulfide bond" evidence="1">
    <location>
        <begin position="426"/>
        <end position="449"/>
    </location>
</feature>
<feature type="disulfide bond" evidence="1">
    <location>
        <begin position="440"/>
        <end position="446"/>
    </location>
</feature>
<feature type="disulfide bond" evidence="1">
    <location>
        <begin position="445"/>
        <end position="471"/>
    </location>
</feature>
<feature type="disulfide bond" evidence="1">
    <location>
        <begin position="458"/>
        <end position="478"/>
    </location>
</feature>
<feature type="disulfide bond" evidence="1">
    <location>
        <begin position="465"/>
        <end position="497"/>
    </location>
</feature>
<feature type="disulfide bond" evidence="1">
    <location>
        <begin position="490"/>
        <end position="502"/>
    </location>
</feature>
<feature type="disulfide bond" evidence="1">
    <location>
        <begin position="509"/>
        <end position="559"/>
    </location>
</feature>
<feature type="disulfide bond" evidence="1">
    <location>
        <begin position="524"/>
        <end position="567"/>
    </location>
</feature>
<feature type="disulfide bond" evidence="1">
    <location>
        <begin position="537"/>
        <end position="547"/>
    </location>
</feature>
<feature type="disulfide bond" evidence="1">
    <location>
        <begin position="554"/>
        <end position="593"/>
    </location>
</feature>
<feature type="disulfide bond" evidence="1">
    <location>
        <begin position="587"/>
        <end position="598"/>
    </location>
</feature>
<feature type="non-terminal residue">
    <location>
        <position position="1"/>
    </location>
</feature>
<sequence>MLVVFPYQGSSIILESGNVNDYEVVYPQKVPSLPKGGVQNPQPETKYEDTMQYEFHVNGEPVVPHLEKNKGLFSEDYTETHYASDGREITTSPSVQDHCYYYGYIQNEADSSAAISACDGLKGHFKHQGETYFIEPLKLSNSEAHAIYKDENVEEEDETPKICGLTQTTWESDEPFKNTSLLIYTPEQNRYLQAKKYIEFYVAVDNRMYRHYKRNKTVIKRRVYELVNILNTIFRRLNFYIALIGLEIWSKRDKVNVQSDVKVTLKSFGKWREKKVAATQKEYNAQLLTRIDFNGNTVGLAALGALCSVKYSVAVIQDYSKRTSMVASTMAHEMGHNLGINHDRASCTSCGSNKCIMSTKRTKPAYRFSSCSVREHRRYLLRDRPQCILNKPLITDIVAPAICGNYFVEVGEECDCGSPRDCQSACCNAATCKLKHGAQCDSGECCRKCKFKKAGAKCRAVKDDCDLPERCTGRSAECPTDIFRRNGLPCQNNQGYCYNGKCPTLTNQCIAFMGPNVKVSRDSCFTLNQRGKGCGYCRMQNGAKFPCAAKDIKCGKLFCKKRNSKICNCLISPDDPNYGMVEPGTKCGDGVVCSNRKCVKLQRVY</sequence>
<protein>
    <recommendedName>
        <fullName>Zinc metalloproteinase-disintegrin-like BfMP</fullName>
        <ecNumber>3.4.24.-</ecNumber>
    </recommendedName>
    <alternativeName>
        <fullName>Snake venom metalloproteinase</fullName>
        <shortName>SVMP</shortName>
    </alternativeName>
</protein>
<reference key="1">
    <citation type="journal article" date="2007" name="Toxicon">
        <title>Isolation and cloning of a metalloproteinase from king cobra snake venom.</title>
        <authorList>
            <person name="Guo X.-X."/>
            <person name="Zeng L."/>
            <person name="Lee W.-H."/>
            <person name="Zhang Y."/>
            <person name="Jin Y."/>
        </authorList>
    </citation>
    <scope>NUCLEOTIDE SEQUENCE [MRNA]</scope>
    <source>
        <tissue>Venom gland</tissue>
    </source>
</reference>
<accession>A8QL48</accession>
<name>VM3_BUNFA</name>
<organism>
    <name type="scientific">Bungarus fasciatus</name>
    <name type="common">Banded krait</name>
    <name type="synonym">Pseudoboa fasciata</name>
    <dbReference type="NCBI Taxonomy" id="8613"/>
    <lineage>
        <taxon>Eukaryota</taxon>
        <taxon>Metazoa</taxon>
        <taxon>Chordata</taxon>
        <taxon>Craniata</taxon>
        <taxon>Vertebrata</taxon>
        <taxon>Euteleostomi</taxon>
        <taxon>Lepidosauria</taxon>
        <taxon>Squamata</taxon>
        <taxon>Bifurcata</taxon>
        <taxon>Unidentata</taxon>
        <taxon>Episquamata</taxon>
        <taxon>Toxicofera</taxon>
        <taxon>Serpentes</taxon>
        <taxon>Colubroidea</taxon>
        <taxon>Elapidae</taxon>
        <taxon>Bungarinae</taxon>
        <taxon>Bungarus</taxon>
    </lineage>
</organism>